<reference key="1">
    <citation type="journal article" date="2007" name="PLoS ONE">
        <title>Paradoxical DNA repair and peroxide resistance gene conservation in Bacillus pumilus SAFR-032.</title>
        <authorList>
            <person name="Gioia J."/>
            <person name="Yerrapragada S."/>
            <person name="Qin X."/>
            <person name="Jiang H."/>
            <person name="Igboeli O.C."/>
            <person name="Muzny D."/>
            <person name="Dugan-Rocha S."/>
            <person name="Ding Y."/>
            <person name="Hawes A."/>
            <person name="Liu W."/>
            <person name="Perez L."/>
            <person name="Kovar C."/>
            <person name="Dinh H."/>
            <person name="Lee S."/>
            <person name="Nazareth L."/>
            <person name="Blyth P."/>
            <person name="Holder M."/>
            <person name="Buhay C."/>
            <person name="Tirumalai M.R."/>
            <person name="Liu Y."/>
            <person name="Dasgupta I."/>
            <person name="Bokhetache L."/>
            <person name="Fujita M."/>
            <person name="Karouia F."/>
            <person name="Eswara Moorthy P."/>
            <person name="Siefert J."/>
            <person name="Uzman A."/>
            <person name="Buzumbo P."/>
            <person name="Verma A."/>
            <person name="Zwiya H."/>
            <person name="McWilliams B.D."/>
            <person name="Olowu A."/>
            <person name="Clinkenbeard K.D."/>
            <person name="Newcombe D."/>
            <person name="Golebiewski L."/>
            <person name="Petrosino J.F."/>
            <person name="Nicholson W.L."/>
            <person name="Fox G.E."/>
            <person name="Venkateswaran K."/>
            <person name="Highlander S.K."/>
            <person name="Weinstock G.M."/>
        </authorList>
    </citation>
    <scope>NUCLEOTIDE SEQUENCE [LARGE SCALE GENOMIC DNA]</scope>
    <source>
        <strain>SAFR-032</strain>
    </source>
</reference>
<feature type="chain" id="PRO_1000065161" description="Regulatory protein RecX">
    <location>
        <begin position="1"/>
        <end position="263"/>
    </location>
</feature>
<gene>
    <name evidence="1" type="primary">recX</name>
    <name type="ordered locus">BPUM_0795</name>
</gene>
<name>RECX_BACP2</name>
<accession>A8FB62</accession>
<comment type="function">
    <text evidence="1">Modulates RecA activity.</text>
</comment>
<comment type="subcellular location">
    <subcellularLocation>
        <location evidence="1">Cytoplasm</location>
    </subcellularLocation>
</comment>
<comment type="similarity">
    <text evidence="1">Belongs to the RecX family.</text>
</comment>
<sequence>MPYITKISAQKNNTERVNIFLDEKYAFSVDLDVLVQHDLKKGKELDEADIIDIQFGDAVKKGFQQAVDYLSYRMRSVKEVTDYLTKKEIPAPAISEIIHKLKHYKYVNDLEFAEAYVSTHRKTNSKGPSVLKKELKLKGIEDDHIEQALSQYPDDLQLEEAVKQVQKLVRKEKNRSTKEIEQRIKLQLQRKGFSFEIIDKALQEAYDGQEEEKEEEALLYMMEKAKRKVGYDGSFEKKMKVKQFLFRKGFDLDTIDHVLDKGE</sequence>
<evidence type="ECO:0000255" key="1">
    <source>
        <dbReference type="HAMAP-Rule" id="MF_01114"/>
    </source>
</evidence>
<keyword id="KW-0963">Cytoplasm</keyword>
<proteinExistence type="inferred from homology"/>
<organism>
    <name type="scientific">Bacillus pumilus (strain SAFR-032)</name>
    <dbReference type="NCBI Taxonomy" id="315750"/>
    <lineage>
        <taxon>Bacteria</taxon>
        <taxon>Bacillati</taxon>
        <taxon>Bacillota</taxon>
        <taxon>Bacilli</taxon>
        <taxon>Bacillales</taxon>
        <taxon>Bacillaceae</taxon>
        <taxon>Bacillus</taxon>
    </lineage>
</organism>
<dbReference type="EMBL" id="CP000813">
    <property type="protein sequence ID" value="ABV61479.1"/>
    <property type="molecule type" value="Genomic_DNA"/>
</dbReference>
<dbReference type="RefSeq" id="WP_012009320.1">
    <property type="nucleotide sequence ID" value="NZ_VEIS01000018.1"/>
</dbReference>
<dbReference type="SMR" id="A8FB62"/>
<dbReference type="STRING" id="315750.BPUM_0795"/>
<dbReference type="GeneID" id="5620040"/>
<dbReference type="KEGG" id="bpu:BPUM_0795"/>
<dbReference type="eggNOG" id="COG2137">
    <property type="taxonomic scope" value="Bacteria"/>
</dbReference>
<dbReference type="HOGENOM" id="CLU_066607_4_0_9"/>
<dbReference type="OrthoDB" id="5421057at2"/>
<dbReference type="Proteomes" id="UP000001355">
    <property type="component" value="Chromosome"/>
</dbReference>
<dbReference type="GO" id="GO:0005737">
    <property type="term" value="C:cytoplasm"/>
    <property type="evidence" value="ECO:0007669"/>
    <property type="project" value="UniProtKB-SubCell"/>
</dbReference>
<dbReference type="GO" id="GO:0006282">
    <property type="term" value="P:regulation of DNA repair"/>
    <property type="evidence" value="ECO:0007669"/>
    <property type="project" value="UniProtKB-UniRule"/>
</dbReference>
<dbReference type="Gene3D" id="1.10.10.10">
    <property type="entry name" value="Winged helix-like DNA-binding domain superfamily/Winged helix DNA-binding domain"/>
    <property type="match status" value="4"/>
</dbReference>
<dbReference type="HAMAP" id="MF_01114">
    <property type="entry name" value="RecX"/>
    <property type="match status" value="1"/>
</dbReference>
<dbReference type="InterPro" id="IPR053926">
    <property type="entry name" value="RecX_HTH_1st"/>
</dbReference>
<dbReference type="InterPro" id="IPR053924">
    <property type="entry name" value="RecX_HTH_2nd"/>
</dbReference>
<dbReference type="InterPro" id="IPR053925">
    <property type="entry name" value="RecX_HTH_3rd"/>
</dbReference>
<dbReference type="InterPro" id="IPR003783">
    <property type="entry name" value="Regulatory_RecX"/>
</dbReference>
<dbReference type="InterPro" id="IPR036388">
    <property type="entry name" value="WH-like_DNA-bd_sf"/>
</dbReference>
<dbReference type="NCBIfam" id="NF010733">
    <property type="entry name" value="PRK14135.1"/>
    <property type="match status" value="1"/>
</dbReference>
<dbReference type="PANTHER" id="PTHR33602">
    <property type="entry name" value="REGULATORY PROTEIN RECX FAMILY PROTEIN"/>
    <property type="match status" value="1"/>
</dbReference>
<dbReference type="PANTHER" id="PTHR33602:SF1">
    <property type="entry name" value="REGULATORY PROTEIN RECX FAMILY PROTEIN"/>
    <property type="match status" value="1"/>
</dbReference>
<dbReference type="Pfam" id="PF21982">
    <property type="entry name" value="RecX_HTH1"/>
    <property type="match status" value="1"/>
</dbReference>
<dbReference type="Pfam" id="PF02631">
    <property type="entry name" value="RecX_HTH2"/>
    <property type="match status" value="1"/>
</dbReference>
<dbReference type="Pfam" id="PF21981">
    <property type="entry name" value="RecX_HTH3"/>
    <property type="match status" value="2"/>
</dbReference>
<protein>
    <recommendedName>
        <fullName evidence="1">Regulatory protein RecX</fullName>
    </recommendedName>
</protein>